<gene>
    <name evidence="1" type="primary">L3</name>
</gene>
<name>PRO_ADEB7</name>
<sequence length="202" mass="23258">MSGLSEKEVFLLLSSLQCTHGFLGTFDCRFPGFINKVKVQTAIINTGPREQGGIHWIALAWDPKSYQMFIFDPLGWKNDQLMKYYKFSYSNLIKRSALSSPDKCVKVIKNSQSVQCTCAGSCGLFCVFFLYCFYKYKSNAFKNCLFQSLYGSIPSLTPPNPTNLHKNQDFLYKFFKEKSLYFRQNEEYIVSNTKIGLIKSHI</sequence>
<accession>P19151</accession>
<proteinExistence type="inferred from homology"/>
<feature type="chain" id="PRO_0000218035" description="Protease">
    <location>
        <begin position="1"/>
        <end position="202"/>
    </location>
</feature>
<feature type="active site" evidence="1">
    <location>
        <position position="55"/>
    </location>
</feature>
<feature type="active site" evidence="1">
    <location>
        <position position="72"/>
    </location>
</feature>
<feature type="active site" evidence="1">
    <location>
        <position position="122"/>
    </location>
</feature>
<feature type="site" description="Cleavage; by autolysis" evidence="1">
    <location>
        <begin position="52"/>
        <end position="53"/>
    </location>
</feature>
<feature type="disulfide bond" description="Interchain (with C-10 in cleaved protease cofactor pVI-C)" evidence="1">
    <location>
        <position position="104"/>
    </location>
</feature>
<comment type="function">
    <text evidence="1">Cleaves viral precursor proteins (pTP, pIIIa, pVI, pVII, pVIII, and pX) inside newly assembled particles giving rise to mature virions. Protease complexed to its cofactor slides along the viral DNA to specifically locate and cleave the viral precursors. Mature virions have a weakened organization compared to the unmature virions, thereby facilitating subsequent uncoating. Without maturation, the particle lacks infectivity and is unable to uncoat. Late in adenovirus infection, in the cytoplasm, may participate in the cytoskeleton destruction. Cleaves host cell cytoskeletal keratins K7 and K18.</text>
</comment>
<comment type="catalytic activity">
    <reaction evidence="1">
        <text>Cleaves proteins of the adenovirus and its host cell at two consensus sites: -Yaa-Xaa-Gly-Gly-|-Xaa- and -Yaa-Xaa-Gly-Xaa-|-Gly- (in which Yaa is Met, Ile or Leu, and Xaa is any amino acid).</text>
        <dbReference type="EC" id="3.4.22.39"/>
    </reaction>
</comment>
<comment type="activity regulation">
    <text evidence="1">Requires DNA and protease cofactor for maximal activation. Inside nascent virions, becomes partially activated by binding to the viral DNA, allowing it to cleave the cofactor that binds to the protease and fully activates it. Actin, like the viral protease cofactor, seems to act as a cofactor in the cleavage of cytokeratin 18 and of actin itself.</text>
</comment>
<comment type="subunit">
    <text evidence="1">Interacts with protease cofactor pVI-C; this interaction is necessary for protease activation.</text>
</comment>
<comment type="subcellular location">
    <subcellularLocation>
        <location evidence="1">Virion</location>
    </subcellularLocation>
    <subcellularLocation>
        <location evidence="1">Host nucleus</location>
    </subcellularLocation>
    <text evidence="1">Present in about 10 copies per virion.</text>
</comment>
<comment type="induction">
    <text evidence="1">Expressed in the late phase of the viral replicative cycle.</text>
</comment>
<comment type="miscellaneous">
    <text evidence="1">All late proteins expressed from the major late promoter are produced by alternative splicing and alternative polyadenylation of the same gene giving rise to non-overlapping ORFs. A leader sequence is present in the N-terminus of all these mRNAs and is recognized by the viral shutoff protein to provide expression although conventional translation via ribosome scanning from the cap has been shut off in the host cell.</text>
</comment>
<comment type="similarity">
    <text evidence="1">Belongs to the peptidase C5 family.</text>
</comment>
<organism>
    <name type="scientific">Bovine adenovirus 7</name>
    <name type="common">BAdV-7</name>
    <dbReference type="NCBI Taxonomy" id="10511"/>
    <lineage>
        <taxon>Viruses</taxon>
        <taxon>Varidnaviria</taxon>
        <taxon>Bamfordvirae</taxon>
        <taxon>Preplasmiviricota</taxon>
        <taxon>Tectiliviricetes</taxon>
        <taxon>Rowavirales</taxon>
        <taxon>Adenoviridae</taxon>
        <taxon>Atadenovirus</taxon>
        <taxon>Bovine adenovirus F</taxon>
    </lineage>
</organism>
<dbReference type="EC" id="3.4.22.39" evidence="1"/>
<dbReference type="EMBL" id="X53989">
    <property type="protein sequence ID" value="CAA37935.1"/>
    <property type="molecule type" value="Genomic_DNA"/>
</dbReference>
<dbReference type="PIR" id="S11434">
    <property type="entry name" value="S11434"/>
</dbReference>
<dbReference type="SMR" id="P19151"/>
<dbReference type="MEROPS" id="C05.001"/>
<dbReference type="GO" id="GO:0042025">
    <property type="term" value="C:host cell nucleus"/>
    <property type="evidence" value="ECO:0007669"/>
    <property type="project" value="UniProtKB-SubCell"/>
</dbReference>
<dbReference type="GO" id="GO:0044423">
    <property type="term" value="C:virion component"/>
    <property type="evidence" value="ECO:0007669"/>
    <property type="project" value="UniProtKB-UniRule"/>
</dbReference>
<dbReference type="GO" id="GO:0004197">
    <property type="term" value="F:cysteine-type endopeptidase activity"/>
    <property type="evidence" value="ECO:0007669"/>
    <property type="project" value="UniProtKB-UniRule"/>
</dbReference>
<dbReference type="GO" id="GO:0003677">
    <property type="term" value="F:DNA binding"/>
    <property type="evidence" value="ECO:0007669"/>
    <property type="project" value="UniProtKB-UniRule"/>
</dbReference>
<dbReference type="GO" id="GO:0006508">
    <property type="term" value="P:proteolysis"/>
    <property type="evidence" value="ECO:0007669"/>
    <property type="project" value="UniProtKB-KW"/>
</dbReference>
<dbReference type="Gene3D" id="3.40.395.10">
    <property type="entry name" value="Adenoviral Proteinase, Chain A"/>
    <property type="match status" value="1"/>
</dbReference>
<dbReference type="HAMAP" id="MF_04059">
    <property type="entry name" value="ADV_PRO"/>
    <property type="match status" value="1"/>
</dbReference>
<dbReference type="InterPro" id="IPR038765">
    <property type="entry name" value="Papain-like_cys_pep_sf"/>
</dbReference>
<dbReference type="InterPro" id="IPR000855">
    <property type="entry name" value="Peptidase_C5"/>
</dbReference>
<dbReference type="Pfam" id="PF00770">
    <property type="entry name" value="Peptidase_C5"/>
    <property type="match status" value="1"/>
</dbReference>
<dbReference type="PIRSF" id="PIRSF001218">
    <property type="entry name" value="Protease_ADV"/>
    <property type="match status" value="1"/>
</dbReference>
<dbReference type="PRINTS" id="PR00703">
    <property type="entry name" value="ADVENDOPTASE"/>
</dbReference>
<dbReference type="SUPFAM" id="SSF54001">
    <property type="entry name" value="Cysteine proteinases"/>
    <property type="match status" value="1"/>
</dbReference>
<protein>
    <recommendedName>
        <fullName evidence="1">Protease</fullName>
        <ecNumber evidence="1">3.4.22.39</ecNumber>
    </recommendedName>
    <alternativeName>
        <fullName evidence="1">Adenain</fullName>
    </alternativeName>
    <alternativeName>
        <fullName evidence="1">Adenovirus protease</fullName>
        <shortName evidence="1">AVP</shortName>
    </alternativeName>
    <alternativeName>
        <fullName evidence="1">Adenovirus proteinase</fullName>
    </alternativeName>
    <alternativeName>
        <fullName evidence="1">Endoprotease</fullName>
    </alternativeName>
</protein>
<reference key="1">
    <citation type="journal article" date="1990" name="Nucleic Acids Res.">
        <title>Nucleotide and deduced amino acid sequence of the bovine adenovirus type 7 proteinase.</title>
        <authorList>
            <person name="Cai F."/>
            <person name="Bourbonniere M."/>
            <person name="Tang D."/>
            <person name="Hu S.L."/>
            <person name="Weber J.M."/>
        </authorList>
    </citation>
    <scope>NUCLEOTIDE SEQUENCE [GENOMIC DNA]</scope>
</reference>
<organismHost>
    <name type="scientific">Bos taurus</name>
    <name type="common">Bovine</name>
    <dbReference type="NCBI Taxonomy" id="9913"/>
</organismHost>
<evidence type="ECO:0000255" key="1">
    <source>
        <dbReference type="HAMAP-Rule" id="MF_04059"/>
    </source>
</evidence>
<keyword id="KW-0068">Autocatalytic cleavage</keyword>
<keyword id="KW-1015">Disulfide bond</keyword>
<keyword id="KW-0238">DNA-binding</keyword>
<keyword id="KW-1048">Host nucleus</keyword>
<keyword id="KW-0378">Hydrolase</keyword>
<keyword id="KW-0426">Late protein</keyword>
<keyword id="KW-0645">Protease</keyword>
<keyword id="KW-0788">Thiol protease</keyword>
<keyword id="KW-0946">Virion</keyword>